<organism>
    <name type="scientific">Nostoc sp. (strain PCC 7120 / SAG 25.82 / UTEX 2576)</name>
    <dbReference type="NCBI Taxonomy" id="103690"/>
    <lineage>
        <taxon>Bacteria</taxon>
        <taxon>Bacillati</taxon>
        <taxon>Cyanobacteriota</taxon>
        <taxon>Cyanophyceae</taxon>
        <taxon>Nostocales</taxon>
        <taxon>Nostocaceae</taxon>
        <taxon>Nostoc</taxon>
    </lineage>
</organism>
<gene>
    <name evidence="1" type="primary">gcvP</name>
    <name type="ordered locus">all4607</name>
</gene>
<evidence type="ECO:0000255" key="1">
    <source>
        <dbReference type="HAMAP-Rule" id="MF_00711"/>
    </source>
</evidence>
<proteinExistence type="inferred from homology"/>
<reference key="1">
    <citation type="journal article" date="2001" name="DNA Res.">
        <title>Complete genomic sequence of the filamentous nitrogen-fixing cyanobacterium Anabaena sp. strain PCC 7120.</title>
        <authorList>
            <person name="Kaneko T."/>
            <person name="Nakamura Y."/>
            <person name="Wolk C.P."/>
            <person name="Kuritz T."/>
            <person name="Sasamoto S."/>
            <person name="Watanabe A."/>
            <person name="Iriguchi M."/>
            <person name="Ishikawa A."/>
            <person name="Kawashima K."/>
            <person name="Kimura T."/>
            <person name="Kishida Y."/>
            <person name="Kohara M."/>
            <person name="Matsumoto M."/>
            <person name="Matsuno A."/>
            <person name="Muraki A."/>
            <person name="Nakazaki N."/>
            <person name="Shimpo S."/>
            <person name="Sugimoto M."/>
            <person name="Takazawa M."/>
            <person name="Yamada M."/>
            <person name="Yasuda M."/>
            <person name="Tabata S."/>
        </authorList>
    </citation>
    <scope>NUCLEOTIDE SEQUENCE [LARGE SCALE GENOMIC DNA]</scope>
    <source>
        <strain>PCC 7120 / SAG 25.82 / UTEX 2576</strain>
    </source>
</reference>
<sequence>MVSYASIPQSSDEAHSTVGASLQLDERKQDLNNFIQRHIGPSSADIQQMLDVLGFSSLDDLIEKTVPSAIRLHEQLQLPEAQTEYAALAKLKQIASKNQVFRSYIGMGYYDTITPSVIGRNILENPGWYTAYTPYQPEIAQGRLEALLNFQTMIIDLTGLEIANASLLDEATAAAEAMSMSYGVSKNKANAYFVSHDCHPQIIDVLQTRAKPLGIEIIIGDHQTFDFDKPIFGAVLQYPASDGTIYDYRAFIETSHAQGALVTVAADPLSLTLLTPPGEFGADIAVGSTQRFGIPLGFGGPHAAYFATKEEYKRQVPGRIVGVSKDVHGKTALRLALQTREQHIRREKATSNICTAQVLLAVMASMYAVYHGPEGLKQIAERIHHLTLVLGVWLQRLGYTITSQSFFDTLQIKLGEKPLQEILEAAEAYRINLRIVDTSTVGISLDETTTLEDVKDICRIFAGTDELPFVLNVQEFDWIIQQSSLKDEPFSRQSSYLTHPVFNRYHSETELLRYLHRLETKDLSLTTSMIPLGSCTMKLNATSEMIPVTWEEFGRIHPFAPLTQTRGYQILFQQLEAWLGEITGFAGVSLQPNAGSQGEYTGLLVIRQYHQSRGETHRNVCLIPNSAHGTNPASAVMCGMKVVAVACDAGGNIDIDDLKAKAEKHSHELAALMVTYPSTHGVFEAGIQEICAVIHSHGGQVYMDGANMNAQVGICRPGDIGADVCHLNLHKTFCIPHGGGGPGMGPIGVASHLVPFLPGHPVLESGKNPQNIGAVAAAPWGSASILVISWMYIVMMGADGLTQATKVAILNANYIAKKLAAYYPVLYKGQNGLVAHECILDLRALKKSANIEIDDIAKRLIDYGFHAPTVSWPVAGTIMVEPTESESQAELDRFCEALIAIRQEIADIEAGKVDIQDNSLKNAPHTVESLIVGEWPHPYSREQAAYPAPWTREHKFWPSVGRIDAAFGDRNFVCSCLPMDAYN</sequence>
<accession>Q8YNF9</accession>
<feature type="chain" id="PRO_0000166902" description="Glycine dehydrogenase (decarboxylating)">
    <location>
        <begin position="1"/>
        <end position="983"/>
    </location>
</feature>
<feature type="modified residue" description="N6-(pyridoxal phosphate)lysine" evidence="1">
    <location>
        <position position="731"/>
    </location>
</feature>
<name>GCSP_NOSS1</name>
<dbReference type="EC" id="1.4.4.2" evidence="1"/>
<dbReference type="EMBL" id="BA000019">
    <property type="protein sequence ID" value="BAB76306.1"/>
    <property type="molecule type" value="Genomic_DNA"/>
</dbReference>
<dbReference type="PIR" id="AG2381">
    <property type="entry name" value="AG2381"/>
</dbReference>
<dbReference type="SMR" id="Q8YNF9"/>
<dbReference type="STRING" id="103690.gene:10496657"/>
<dbReference type="KEGG" id="ana:all4607"/>
<dbReference type="eggNOG" id="COG0403">
    <property type="taxonomic scope" value="Bacteria"/>
</dbReference>
<dbReference type="eggNOG" id="COG1003">
    <property type="taxonomic scope" value="Bacteria"/>
</dbReference>
<dbReference type="OrthoDB" id="9801272at2"/>
<dbReference type="Proteomes" id="UP000002483">
    <property type="component" value="Chromosome"/>
</dbReference>
<dbReference type="GO" id="GO:0005829">
    <property type="term" value="C:cytosol"/>
    <property type="evidence" value="ECO:0007669"/>
    <property type="project" value="TreeGrafter"/>
</dbReference>
<dbReference type="GO" id="GO:0005960">
    <property type="term" value="C:glycine cleavage complex"/>
    <property type="evidence" value="ECO:0007669"/>
    <property type="project" value="TreeGrafter"/>
</dbReference>
<dbReference type="GO" id="GO:0016594">
    <property type="term" value="F:glycine binding"/>
    <property type="evidence" value="ECO:0007669"/>
    <property type="project" value="TreeGrafter"/>
</dbReference>
<dbReference type="GO" id="GO:0004375">
    <property type="term" value="F:glycine dehydrogenase (decarboxylating) activity"/>
    <property type="evidence" value="ECO:0007669"/>
    <property type="project" value="UniProtKB-EC"/>
</dbReference>
<dbReference type="GO" id="GO:0030170">
    <property type="term" value="F:pyridoxal phosphate binding"/>
    <property type="evidence" value="ECO:0007669"/>
    <property type="project" value="TreeGrafter"/>
</dbReference>
<dbReference type="GO" id="GO:0019464">
    <property type="term" value="P:glycine decarboxylation via glycine cleavage system"/>
    <property type="evidence" value="ECO:0007669"/>
    <property type="project" value="UniProtKB-UniRule"/>
</dbReference>
<dbReference type="CDD" id="cd00613">
    <property type="entry name" value="GDC-P"/>
    <property type="match status" value="2"/>
</dbReference>
<dbReference type="FunFam" id="3.90.1150.10:FF:000025">
    <property type="entry name" value="Glycine cleavage system P protein"/>
    <property type="match status" value="1"/>
</dbReference>
<dbReference type="FunFam" id="3.40.640.10:FF:000005">
    <property type="entry name" value="Glycine dehydrogenase (decarboxylating), mitochondrial"/>
    <property type="match status" value="1"/>
</dbReference>
<dbReference type="FunFam" id="3.90.1150.10:FF:000007">
    <property type="entry name" value="Glycine dehydrogenase (decarboxylating), mitochondrial"/>
    <property type="match status" value="1"/>
</dbReference>
<dbReference type="FunFam" id="3.40.640.10:FF:000007">
    <property type="entry name" value="glycine dehydrogenase (Decarboxylating), mitochondrial"/>
    <property type="match status" value="1"/>
</dbReference>
<dbReference type="Gene3D" id="3.90.1150.10">
    <property type="entry name" value="Aspartate Aminotransferase, domain 1"/>
    <property type="match status" value="2"/>
</dbReference>
<dbReference type="Gene3D" id="3.40.640.10">
    <property type="entry name" value="Type I PLP-dependent aspartate aminotransferase-like (Major domain)"/>
    <property type="match status" value="2"/>
</dbReference>
<dbReference type="HAMAP" id="MF_00711">
    <property type="entry name" value="GcvP"/>
    <property type="match status" value="1"/>
</dbReference>
<dbReference type="InterPro" id="IPR003437">
    <property type="entry name" value="GcvP"/>
</dbReference>
<dbReference type="InterPro" id="IPR049316">
    <property type="entry name" value="GDC-P_C"/>
</dbReference>
<dbReference type="InterPro" id="IPR049315">
    <property type="entry name" value="GDC-P_N"/>
</dbReference>
<dbReference type="InterPro" id="IPR020581">
    <property type="entry name" value="GDC_P"/>
</dbReference>
<dbReference type="InterPro" id="IPR015424">
    <property type="entry name" value="PyrdxlP-dep_Trfase"/>
</dbReference>
<dbReference type="InterPro" id="IPR015421">
    <property type="entry name" value="PyrdxlP-dep_Trfase_major"/>
</dbReference>
<dbReference type="InterPro" id="IPR015422">
    <property type="entry name" value="PyrdxlP-dep_Trfase_small"/>
</dbReference>
<dbReference type="NCBIfam" id="TIGR00461">
    <property type="entry name" value="gcvP"/>
    <property type="match status" value="1"/>
</dbReference>
<dbReference type="NCBIfam" id="NF001696">
    <property type="entry name" value="PRK00451.1"/>
    <property type="match status" value="1"/>
</dbReference>
<dbReference type="NCBIfam" id="NF003346">
    <property type="entry name" value="PRK04366.1"/>
    <property type="match status" value="1"/>
</dbReference>
<dbReference type="PANTHER" id="PTHR11773:SF1">
    <property type="entry name" value="GLYCINE DEHYDROGENASE (DECARBOXYLATING), MITOCHONDRIAL"/>
    <property type="match status" value="1"/>
</dbReference>
<dbReference type="PANTHER" id="PTHR11773">
    <property type="entry name" value="GLYCINE DEHYDROGENASE, DECARBOXYLATING"/>
    <property type="match status" value="1"/>
</dbReference>
<dbReference type="Pfam" id="PF21478">
    <property type="entry name" value="GcvP2_C"/>
    <property type="match status" value="1"/>
</dbReference>
<dbReference type="Pfam" id="PF02347">
    <property type="entry name" value="GDC-P"/>
    <property type="match status" value="2"/>
</dbReference>
<dbReference type="SUPFAM" id="SSF53383">
    <property type="entry name" value="PLP-dependent transferases"/>
    <property type="match status" value="2"/>
</dbReference>
<protein>
    <recommendedName>
        <fullName evidence="1">Glycine dehydrogenase (decarboxylating)</fullName>
        <ecNumber evidence="1">1.4.4.2</ecNumber>
    </recommendedName>
    <alternativeName>
        <fullName evidence="1">Glycine cleavage system P-protein</fullName>
    </alternativeName>
    <alternativeName>
        <fullName evidence="1">Glycine decarboxylase</fullName>
    </alternativeName>
    <alternativeName>
        <fullName evidence="1">Glycine dehydrogenase (aminomethyl-transferring)</fullName>
    </alternativeName>
</protein>
<keyword id="KW-0560">Oxidoreductase</keyword>
<keyword id="KW-0663">Pyridoxal phosphate</keyword>
<keyword id="KW-1185">Reference proteome</keyword>
<comment type="function">
    <text evidence="1">The glycine cleavage system catalyzes the degradation of glycine. The P protein binds the alpha-amino group of glycine through its pyridoxal phosphate cofactor; CO(2) is released and the remaining methylamine moiety is then transferred to the lipoamide cofactor of the H protein.</text>
</comment>
<comment type="catalytic activity">
    <reaction evidence="1">
        <text>N(6)-[(R)-lipoyl]-L-lysyl-[glycine-cleavage complex H protein] + glycine + H(+) = N(6)-[(R)-S(8)-aminomethyldihydrolipoyl]-L-lysyl-[glycine-cleavage complex H protein] + CO2</text>
        <dbReference type="Rhea" id="RHEA:24304"/>
        <dbReference type="Rhea" id="RHEA-COMP:10494"/>
        <dbReference type="Rhea" id="RHEA-COMP:10495"/>
        <dbReference type="ChEBI" id="CHEBI:15378"/>
        <dbReference type="ChEBI" id="CHEBI:16526"/>
        <dbReference type="ChEBI" id="CHEBI:57305"/>
        <dbReference type="ChEBI" id="CHEBI:83099"/>
        <dbReference type="ChEBI" id="CHEBI:83143"/>
        <dbReference type="EC" id="1.4.4.2"/>
    </reaction>
</comment>
<comment type="cofactor">
    <cofactor evidence="1">
        <name>pyridoxal 5'-phosphate</name>
        <dbReference type="ChEBI" id="CHEBI:597326"/>
    </cofactor>
</comment>
<comment type="subunit">
    <text evidence="1">The glycine cleavage system is composed of four proteins: P, T, L and H.</text>
</comment>
<comment type="similarity">
    <text evidence="1">Belongs to the GcvP family.</text>
</comment>